<gene>
    <name evidence="1" type="primary">sepF</name>
    <name type="ordered locus">BA_4038</name>
    <name type="ordered locus">GBAA_4038</name>
    <name type="ordered locus">BAS3750</name>
</gene>
<reference key="1">
    <citation type="journal article" date="2003" name="Nature">
        <title>The genome sequence of Bacillus anthracis Ames and comparison to closely related bacteria.</title>
        <authorList>
            <person name="Read T.D."/>
            <person name="Peterson S.N."/>
            <person name="Tourasse N.J."/>
            <person name="Baillie L.W."/>
            <person name="Paulsen I.T."/>
            <person name="Nelson K.E."/>
            <person name="Tettelin H."/>
            <person name="Fouts D.E."/>
            <person name="Eisen J.A."/>
            <person name="Gill S.R."/>
            <person name="Holtzapple E.K."/>
            <person name="Okstad O.A."/>
            <person name="Helgason E."/>
            <person name="Rilstone J."/>
            <person name="Wu M."/>
            <person name="Kolonay J.F."/>
            <person name="Beanan M.J."/>
            <person name="Dodson R.J."/>
            <person name="Brinkac L.M."/>
            <person name="Gwinn M.L."/>
            <person name="DeBoy R.T."/>
            <person name="Madpu R."/>
            <person name="Daugherty S.C."/>
            <person name="Durkin A.S."/>
            <person name="Haft D.H."/>
            <person name="Nelson W.C."/>
            <person name="Peterson J.D."/>
            <person name="Pop M."/>
            <person name="Khouri H.M."/>
            <person name="Radune D."/>
            <person name="Benton J.L."/>
            <person name="Mahamoud Y."/>
            <person name="Jiang L."/>
            <person name="Hance I.R."/>
            <person name="Weidman J.F."/>
            <person name="Berry K.J."/>
            <person name="Plaut R.D."/>
            <person name="Wolf A.M."/>
            <person name="Watkins K.L."/>
            <person name="Nierman W.C."/>
            <person name="Hazen A."/>
            <person name="Cline R.T."/>
            <person name="Redmond C."/>
            <person name="Thwaite J.E."/>
            <person name="White O."/>
            <person name="Salzberg S.L."/>
            <person name="Thomason B."/>
            <person name="Friedlander A.M."/>
            <person name="Koehler T.M."/>
            <person name="Hanna P.C."/>
            <person name="Kolstoe A.-B."/>
            <person name="Fraser C.M."/>
        </authorList>
    </citation>
    <scope>NUCLEOTIDE SEQUENCE [LARGE SCALE GENOMIC DNA]</scope>
    <source>
        <strain>Ames / isolate Porton</strain>
    </source>
</reference>
<reference key="2">
    <citation type="submission" date="2004-01" db="EMBL/GenBank/DDBJ databases">
        <title>Complete genome sequence of Bacillus anthracis Sterne.</title>
        <authorList>
            <person name="Brettin T.S."/>
            <person name="Bruce D."/>
            <person name="Challacombe J.F."/>
            <person name="Gilna P."/>
            <person name="Han C."/>
            <person name="Hill K."/>
            <person name="Hitchcock P."/>
            <person name="Jackson P."/>
            <person name="Keim P."/>
            <person name="Longmire J."/>
            <person name="Lucas S."/>
            <person name="Okinaka R."/>
            <person name="Richardson P."/>
            <person name="Rubin E."/>
            <person name="Tice H."/>
        </authorList>
    </citation>
    <scope>NUCLEOTIDE SEQUENCE [LARGE SCALE GENOMIC DNA]</scope>
    <source>
        <strain>Sterne</strain>
    </source>
</reference>
<reference key="3">
    <citation type="journal article" date="2009" name="J. Bacteriol.">
        <title>The complete genome sequence of Bacillus anthracis Ames 'Ancestor'.</title>
        <authorList>
            <person name="Ravel J."/>
            <person name="Jiang L."/>
            <person name="Stanley S.T."/>
            <person name="Wilson M.R."/>
            <person name="Decker R.S."/>
            <person name="Read T.D."/>
            <person name="Worsham P."/>
            <person name="Keim P.S."/>
            <person name="Salzberg S.L."/>
            <person name="Fraser-Liggett C.M."/>
            <person name="Rasko D.A."/>
        </authorList>
    </citation>
    <scope>NUCLEOTIDE SEQUENCE [LARGE SCALE GENOMIC DNA]</scope>
    <source>
        <strain>Ames ancestor</strain>
    </source>
</reference>
<evidence type="ECO:0000255" key="1">
    <source>
        <dbReference type="HAMAP-Rule" id="MF_01197"/>
    </source>
</evidence>
<evidence type="ECO:0000256" key="2">
    <source>
        <dbReference type="SAM" id="MobiDB-lite"/>
    </source>
</evidence>
<keyword id="KW-0131">Cell cycle</keyword>
<keyword id="KW-0132">Cell division</keyword>
<keyword id="KW-0963">Cytoplasm</keyword>
<keyword id="KW-1185">Reference proteome</keyword>
<keyword id="KW-0717">Septation</keyword>
<dbReference type="EMBL" id="AE016879">
    <property type="protein sequence ID" value="AAP27764.1"/>
    <property type="molecule type" value="Genomic_DNA"/>
</dbReference>
<dbReference type="EMBL" id="AE017334">
    <property type="protein sequence ID" value="AAT33155.1"/>
    <property type="molecule type" value="Genomic_DNA"/>
</dbReference>
<dbReference type="EMBL" id="AE017225">
    <property type="protein sequence ID" value="AAT56052.1"/>
    <property type="molecule type" value="Genomic_DNA"/>
</dbReference>
<dbReference type="RefSeq" id="NP_846278.1">
    <property type="nucleotide sequence ID" value="NC_003997.3"/>
</dbReference>
<dbReference type="RefSeq" id="WP_000119134.1">
    <property type="nucleotide sequence ID" value="NZ_WXXJ01000026.1"/>
</dbReference>
<dbReference type="RefSeq" id="YP_030001.1">
    <property type="nucleotide sequence ID" value="NC_005945.1"/>
</dbReference>
<dbReference type="SMR" id="Q81WE0"/>
<dbReference type="STRING" id="261594.GBAA_4038"/>
<dbReference type="DNASU" id="1086622"/>
<dbReference type="GeneID" id="45023728"/>
<dbReference type="KEGG" id="ban:BA_4038"/>
<dbReference type="KEGG" id="banh:HYU01_19740"/>
<dbReference type="KEGG" id="bar:GBAA_4038"/>
<dbReference type="KEGG" id="bat:BAS3750"/>
<dbReference type="PATRIC" id="fig|198094.11.peg.4009"/>
<dbReference type="eggNOG" id="COG1799">
    <property type="taxonomic scope" value="Bacteria"/>
</dbReference>
<dbReference type="HOGENOM" id="CLU_078499_4_1_9"/>
<dbReference type="OMA" id="NFSRMED"/>
<dbReference type="OrthoDB" id="9815206at2"/>
<dbReference type="Proteomes" id="UP000000427">
    <property type="component" value="Chromosome"/>
</dbReference>
<dbReference type="Proteomes" id="UP000000594">
    <property type="component" value="Chromosome"/>
</dbReference>
<dbReference type="GO" id="GO:0005737">
    <property type="term" value="C:cytoplasm"/>
    <property type="evidence" value="ECO:0007669"/>
    <property type="project" value="UniProtKB-SubCell"/>
</dbReference>
<dbReference type="GO" id="GO:0000917">
    <property type="term" value="P:division septum assembly"/>
    <property type="evidence" value="ECO:0007669"/>
    <property type="project" value="UniProtKB-KW"/>
</dbReference>
<dbReference type="GO" id="GO:0043093">
    <property type="term" value="P:FtsZ-dependent cytokinesis"/>
    <property type="evidence" value="ECO:0007669"/>
    <property type="project" value="UniProtKB-UniRule"/>
</dbReference>
<dbReference type="Gene3D" id="3.30.110.150">
    <property type="entry name" value="SepF-like protein"/>
    <property type="match status" value="1"/>
</dbReference>
<dbReference type="HAMAP" id="MF_01197">
    <property type="entry name" value="SepF"/>
    <property type="match status" value="1"/>
</dbReference>
<dbReference type="InterPro" id="IPR023052">
    <property type="entry name" value="Cell_div_SepF"/>
</dbReference>
<dbReference type="InterPro" id="IPR007561">
    <property type="entry name" value="Cell_div_SepF/SepF-rel"/>
</dbReference>
<dbReference type="InterPro" id="IPR038594">
    <property type="entry name" value="SepF-like_sf"/>
</dbReference>
<dbReference type="PANTHER" id="PTHR35798">
    <property type="entry name" value="CELL DIVISION PROTEIN SEPF"/>
    <property type="match status" value="1"/>
</dbReference>
<dbReference type="PANTHER" id="PTHR35798:SF1">
    <property type="entry name" value="CELL DIVISION PROTEIN SEPF"/>
    <property type="match status" value="1"/>
</dbReference>
<dbReference type="Pfam" id="PF04472">
    <property type="entry name" value="SepF"/>
    <property type="match status" value="1"/>
</dbReference>
<accession>Q81WE0</accession>
<accession>Q6HUI7</accession>
<accession>Q6KNS3</accession>
<sequence length="156" mass="17725">MSWSKVKYFFFDTPEEKEAAQYSYEKEQTDMKKQQDPPEQQDVTFPKAQPKQNVVSIETAKQSSKVVLLEPRTYSEAQGIADHLKGRRAVVINLQRMSTDQAVRIVDFLSGTVYAIGGDIQKIGPKTFMCTPENVDIVGAISELFGEEDDTNIKRW</sequence>
<organism>
    <name type="scientific">Bacillus anthracis</name>
    <dbReference type="NCBI Taxonomy" id="1392"/>
    <lineage>
        <taxon>Bacteria</taxon>
        <taxon>Bacillati</taxon>
        <taxon>Bacillota</taxon>
        <taxon>Bacilli</taxon>
        <taxon>Bacillales</taxon>
        <taxon>Bacillaceae</taxon>
        <taxon>Bacillus</taxon>
        <taxon>Bacillus cereus group</taxon>
    </lineage>
</organism>
<comment type="function">
    <text evidence="1">Cell division protein that is part of the divisome complex and is recruited early to the Z-ring. Probably stimulates Z-ring formation, perhaps through the cross-linking of FtsZ protofilaments. Its function overlaps with FtsA.</text>
</comment>
<comment type="subunit">
    <text evidence="1">Homodimer. Interacts with FtsZ.</text>
</comment>
<comment type="subcellular location">
    <subcellularLocation>
        <location evidence="1">Cytoplasm</location>
    </subcellularLocation>
    <text evidence="1">Localizes to the division site, in a FtsZ-dependent manner.</text>
</comment>
<comment type="similarity">
    <text evidence="1">Belongs to the SepF family.</text>
</comment>
<protein>
    <recommendedName>
        <fullName evidence="1">Cell division protein SepF</fullName>
    </recommendedName>
</protein>
<proteinExistence type="inferred from homology"/>
<feature type="chain" id="PRO_0000333975" description="Cell division protein SepF">
    <location>
        <begin position="1"/>
        <end position="156"/>
    </location>
</feature>
<feature type="region of interest" description="Disordered" evidence="2">
    <location>
        <begin position="23"/>
        <end position="49"/>
    </location>
</feature>
<feature type="compositionally biased region" description="Basic and acidic residues" evidence="2">
    <location>
        <begin position="23"/>
        <end position="36"/>
    </location>
</feature>
<name>SEPF_BACAN</name>